<proteinExistence type="inferred from homology"/>
<accession>Q48PK6</accession>
<organism>
    <name type="scientific">Pseudomonas savastanoi pv. phaseolicola (strain 1448A / Race 6)</name>
    <name type="common">Pseudomonas syringae pv. phaseolicola (strain 1448A / Race 6)</name>
    <dbReference type="NCBI Taxonomy" id="264730"/>
    <lineage>
        <taxon>Bacteria</taxon>
        <taxon>Pseudomonadati</taxon>
        <taxon>Pseudomonadota</taxon>
        <taxon>Gammaproteobacteria</taxon>
        <taxon>Pseudomonadales</taxon>
        <taxon>Pseudomonadaceae</taxon>
        <taxon>Pseudomonas</taxon>
    </lineage>
</organism>
<dbReference type="EC" id="2.4.1.-" evidence="1"/>
<dbReference type="EMBL" id="CP000058">
    <property type="protein sequence ID" value="AAZ34542.1"/>
    <property type="molecule type" value="Genomic_DNA"/>
</dbReference>
<dbReference type="CAZy" id="GT2">
    <property type="family name" value="Glycosyltransferase Family 2"/>
</dbReference>
<dbReference type="KEGG" id="psp:PSPPH_0360"/>
<dbReference type="eggNOG" id="COG2943">
    <property type="taxonomic scope" value="Bacteria"/>
</dbReference>
<dbReference type="HOGENOM" id="CLU_015730_1_0_6"/>
<dbReference type="UniPathway" id="UPA00637"/>
<dbReference type="Proteomes" id="UP000000551">
    <property type="component" value="Chromosome"/>
</dbReference>
<dbReference type="GO" id="GO:0005886">
    <property type="term" value="C:plasma membrane"/>
    <property type="evidence" value="ECO:0007669"/>
    <property type="project" value="UniProtKB-SubCell"/>
</dbReference>
<dbReference type="GO" id="GO:0016758">
    <property type="term" value="F:hexosyltransferase activity"/>
    <property type="evidence" value="ECO:0007669"/>
    <property type="project" value="UniProtKB-UniRule"/>
</dbReference>
<dbReference type="GO" id="GO:0009250">
    <property type="term" value="P:glucan biosynthetic process"/>
    <property type="evidence" value="ECO:0007669"/>
    <property type="project" value="UniProtKB-UniRule"/>
</dbReference>
<dbReference type="CDD" id="cd04191">
    <property type="entry name" value="Glucan_BSP_MdoH"/>
    <property type="match status" value="1"/>
</dbReference>
<dbReference type="FunFam" id="3.90.550.10:FF:000047">
    <property type="entry name" value="Glucans biosynthesis glucosyltransferase H"/>
    <property type="match status" value="1"/>
</dbReference>
<dbReference type="Gene3D" id="3.90.550.10">
    <property type="entry name" value="Spore Coat Polysaccharide Biosynthesis Protein SpsA, Chain A"/>
    <property type="match status" value="1"/>
</dbReference>
<dbReference type="HAMAP" id="MF_01072">
    <property type="entry name" value="MdoH_OpgH"/>
    <property type="match status" value="1"/>
</dbReference>
<dbReference type="InterPro" id="IPR023725">
    <property type="entry name" value="Glucans_biosynth_gluTrFase_H"/>
</dbReference>
<dbReference type="InterPro" id="IPR001173">
    <property type="entry name" value="Glyco_trans_2-like"/>
</dbReference>
<dbReference type="InterPro" id="IPR050321">
    <property type="entry name" value="Glycosyltr_2/OpgH_subfam"/>
</dbReference>
<dbReference type="InterPro" id="IPR029044">
    <property type="entry name" value="Nucleotide-diphossugar_trans"/>
</dbReference>
<dbReference type="NCBIfam" id="NF003955">
    <property type="entry name" value="PRK05454.1-1"/>
    <property type="match status" value="1"/>
</dbReference>
<dbReference type="NCBIfam" id="NF003958">
    <property type="entry name" value="PRK05454.2-1"/>
    <property type="match status" value="1"/>
</dbReference>
<dbReference type="NCBIfam" id="NF003962">
    <property type="entry name" value="PRK05454.2-5"/>
    <property type="match status" value="1"/>
</dbReference>
<dbReference type="PANTHER" id="PTHR43867">
    <property type="entry name" value="CELLULOSE SYNTHASE CATALYTIC SUBUNIT A [UDP-FORMING]"/>
    <property type="match status" value="1"/>
</dbReference>
<dbReference type="PANTHER" id="PTHR43867:SF5">
    <property type="entry name" value="GLUCANS BIOSYNTHESIS GLUCOSYLTRANSFERASE H"/>
    <property type="match status" value="1"/>
</dbReference>
<dbReference type="Pfam" id="PF00535">
    <property type="entry name" value="Glycos_transf_2"/>
    <property type="match status" value="1"/>
</dbReference>
<dbReference type="SUPFAM" id="SSF53448">
    <property type="entry name" value="Nucleotide-diphospho-sugar transferases"/>
    <property type="match status" value="1"/>
</dbReference>
<gene>
    <name evidence="1" type="primary">opgH</name>
    <name type="ordered locus">PSPPH_0360</name>
</gene>
<feature type="chain" id="PRO_1000064606" description="Glucans biosynthesis glucosyltransferase H">
    <location>
        <begin position="1"/>
        <end position="860"/>
    </location>
</feature>
<feature type="transmembrane region" description="Helical" evidence="1">
    <location>
        <begin position="146"/>
        <end position="166"/>
    </location>
</feature>
<feature type="transmembrane region" description="Helical" evidence="1">
    <location>
        <begin position="200"/>
        <end position="220"/>
    </location>
</feature>
<feature type="transmembrane region" description="Helical" evidence="1">
    <location>
        <begin position="519"/>
        <end position="539"/>
    </location>
</feature>
<feature type="transmembrane region" description="Helical" evidence="1">
    <location>
        <begin position="576"/>
        <end position="596"/>
    </location>
</feature>
<feature type="transmembrane region" description="Helical" evidence="1">
    <location>
        <begin position="610"/>
        <end position="630"/>
    </location>
</feature>
<feature type="transmembrane region" description="Helical" evidence="1">
    <location>
        <begin position="686"/>
        <end position="706"/>
    </location>
</feature>
<keyword id="KW-0997">Cell inner membrane</keyword>
<keyword id="KW-1003">Cell membrane</keyword>
<keyword id="KW-0328">Glycosyltransferase</keyword>
<keyword id="KW-0472">Membrane</keyword>
<keyword id="KW-0808">Transferase</keyword>
<keyword id="KW-0812">Transmembrane</keyword>
<keyword id="KW-1133">Transmembrane helix</keyword>
<comment type="function">
    <text evidence="1">Involved in the biosynthesis of osmoregulated periplasmic glucans (OPGs).</text>
</comment>
<comment type="pathway">
    <text evidence="1">Glycan metabolism; osmoregulated periplasmic glucan (OPG) biosynthesis.</text>
</comment>
<comment type="subcellular location">
    <subcellularLocation>
        <location evidence="1">Cell inner membrane</location>
        <topology evidence="1">Multi-pass membrane protein</topology>
    </subcellularLocation>
</comment>
<comment type="similarity">
    <text evidence="1">Belongs to the glycosyltransferase 2 family. OpgH subfamily.</text>
</comment>
<name>OPGH_PSE14</name>
<protein>
    <recommendedName>
        <fullName evidence="1">Glucans biosynthesis glucosyltransferase H</fullName>
        <ecNumber evidence="1">2.4.1.-</ecNumber>
    </recommendedName>
</protein>
<evidence type="ECO:0000255" key="1">
    <source>
        <dbReference type="HAMAP-Rule" id="MF_01072"/>
    </source>
</evidence>
<reference key="1">
    <citation type="journal article" date="2005" name="J. Bacteriol.">
        <title>Whole-genome sequence analysis of Pseudomonas syringae pv. phaseolicola 1448A reveals divergence among pathovars in genes involved in virulence and transposition.</title>
        <authorList>
            <person name="Joardar V."/>
            <person name="Lindeberg M."/>
            <person name="Jackson R.W."/>
            <person name="Selengut J."/>
            <person name="Dodson R."/>
            <person name="Brinkac L.M."/>
            <person name="Daugherty S.C."/>
            <person name="DeBoy R.T."/>
            <person name="Durkin A.S."/>
            <person name="Gwinn Giglio M."/>
            <person name="Madupu R."/>
            <person name="Nelson W.C."/>
            <person name="Rosovitz M.J."/>
            <person name="Sullivan S.A."/>
            <person name="Crabtree J."/>
            <person name="Creasy T."/>
            <person name="Davidsen T.M."/>
            <person name="Haft D.H."/>
            <person name="Zafar N."/>
            <person name="Zhou L."/>
            <person name="Halpin R."/>
            <person name="Holley T."/>
            <person name="Khouri H.M."/>
            <person name="Feldblyum T.V."/>
            <person name="White O."/>
            <person name="Fraser C.M."/>
            <person name="Chatterjee A.K."/>
            <person name="Cartinhour S."/>
            <person name="Schneider D."/>
            <person name="Mansfield J.W."/>
            <person name="Collmer A."/>
            <person name="Buell R."/>
        </authorList>
    </citation>
    <scope>NUCLEOTIDE SEQUENCE [LARGE SCALE GENOMIC DNA]</scope>
    <source>
        <strain>1448A / Race 6</strain>
    </source>
</reference>
<sequence length="860" mass="97093">MSNSLPVPVSLNEYLAHLPMSDEQRAELAGCKTFAELHERLSAQPVNDPAEAAQASVGRRLTLTTADQLEDAEMLGVDASGRLCLKATPPIRRTKVVPEPWRTNILVRGWRRLTGKTNPPKPEHDDLPRDLPKARWRTVGSIRRYILLILMLGQTIVAGWYMKGILPYQGWSLVSLDEITRQTFVQTALQVMPYALQTSILLLFGILFCWVSAGFWTALMGFLELLTGRDKYRISGASAGNEPIEKGARTALVMPICNEDVPRVFAGLRATFESVAATGDLDRFDFFVLSDTNETDIAVAEQQAWLDVCRETKGFGKIFYRRRRRRVKRKSGNLDDFCRRWGGEYRYMVVLDADSVMSGECLTSLVRLMEATPDAGIIQTAPRASGMDTLYARMQQFATRVYGPLFTAGLHFWQLGESHYWGHNAIIRMKPFIEHCALAPLPGKGAFAGAILSHDFVEAALMRRAGWGVWIAYDLPGSYEELPPNLLDELKRDRRWCHGNLMNFRLFLVKGMHPVHRAVFLTGVMSYLSAPLWFFFLVLSTALLAVNTLMEPTYFLEPRQLYPLWPQWHPEKAVALFSTTIVLLFLPKLLSVILIWAKGAKGFGGKFKVTVSMLLEMLFSVLLAPVRMLFHTRFVLAAFLGWAATWNSPQRDDDSTPWIEAVKRHGPQTLLGACWALLVFWLNPSFLWWLAPIVVSLMLSIPVSVISSRTNLGVKARDEKFFLIPEEFEPPQELISTDQYTYENRWHALKQGFIRAVVDPRQNALACALATSRHRQAQPIEVVRMERVDQALKVGPAKLGNQERLMLLSDPVALGRLHERVWSEGHEEWLAAWRASIEADPHAPLLPLQPVGKASEPVPV</sequence>